<accession>Q2NC10</accession>
<keyword id="KW-0963">Cytoplasm</keyword>
<keyword id="KW-0342">GTP-binding</keyword>
<keyword id="KW-0396">Initiation factor</keyword>
<keyword id="KW-0547">Nucleotide-binding</keyword>
<keyword id="KW-0648">Protein biosynthesis</keyword>
<keyword id="KW-1185">Reference proteome</keyword>
<protein>
    <recommendedName>
        <fullName evidence="2">Translation initiation factor IF-2</fullName>
    </recommendedName>
</protein>
<sequence>MSDDNDKPRTRKPLGLKRSVDAGEVKQTFSHGRTNKVAVEVKRKRKLLKPGETPAPAPEPAPEPAPAPAPAPAAKKPAPKKPAPAAETPQERVARLQREAEEERLKLAEDARKRDDQKAKQNADDEKKRQEENKKAEEEAEKQAAAEAEAAAAAEAAPEEDADDGRKAPVARKFTPVARPEPKRPEKKKEEKKPARGGAKDKRRSGKLTVSKALNEDEGRRAMSLAKLKRAREKERRLKGGGSSAPREKQVRDVIVPEAITVGELAKRMGEKGADLVKELFNLDMMVTVNQTIDQDTAELLVEQFGHNIQKVSEADVDIQAEEDVDPEETLQPRPPVVTIMGHVDHGKTSLLDALRGTNVTKGEAGGITQHIGSYQVNTKSGGKVTFLDTPGHAAFSEMRQRGANVTDIVVLVVAADDGVMPQTIEAIKHTKAAGVPMIVAINKCDKPEADPDNIRNRLLEHEIIVEKLSGDVQDVEISATKKTGLDELLEKIELQAELLELKARPDRMAEATVIEAQLDKGRGPVATVLITRGTLKRGDTFVVGTESGRVRAVVNDQGKQIKEAGPSMPVEVLGLGGVPGAGDQLTVVENEQRAREVAEYRQEKATEKRTALAPTSFDTMFNNLQSNVIEWPVLVKADVQGSVEAIVTALHNISNDEIKVRVLHAGVGAITESDVTLAAASNAPIIGFNVRPNAKARELVKRDDVRMMYYDVIYHLTDEVAKEMAGELGPERIETVVGRADVKEVFKSGKKDKAAGLLVTDGVIRKGLFARLTRDDVIVSATTIASLRRFKDDVDEVRSGLECGVVLEDTNDIQPGDSLEVFEVEERERTL</sequence>
<feature type="chain" id="PRO_1000008242" description="Translation initiation factor IF-2">
    <location>
        <begin position="1"/>
        <end position="832"/>
    </location>
</feature>
<feature type="domain" description="tr-type G">
    <location>
        <begin position="333"/>
        <end position="503"/>
    </location>
</feature>
<feature type="region of interest" description="Disordered" evidence="3">
    <location>
        <begin position="1"/>
        <end position="249"/>
    </location>
</feature>
<feature type="region of interest" description="G1" evidence="1">
    <location>
        <begin position="342"/>
        <end position="349"/>
    </location>
</feature>
<feature type="region of interest" description="G2" evidence="1">
    <location>
        <begin position="367"/>
        <end position="371"/>
    </location>
</feature>
<feature type="region of interest" description="G3" evidence="1">
    <location>
        <begin position="389"/>
        <end position="392"/>
    </location>
</feature>
<feature type="region of interest" description="G4" evidence="1">
    <location>
        <begin position="443"/>
        <end position="446"/>
    </location>
</feature>
<feature type="region of interest" description="G5" evidence="1">
    <location>
        <begin position="479"/>
        <end position="481"/>
    </location>
</feature>
<feature type="compositionally biased region" description="Pro residues" evidence="3">
    <location>
        <begin position="53"/>
        <end position="71"/>
    </location>
</feature>
<feature type="compositionally biased region" description="Basic and acidic residues" evidence="3">
    <location>
        <begin position="89"/>
        <end position="144"/>
    </location>
</feature>
<feature type="compositionally biased region" description="Low complexity" evidence="3">
    <location>
        <begin position="145"/>
        <end position="156"/>
    </location>
</feature>
<feature type="compositionally biased region" description="Basic and acidic residues" evidence="3">
    <location>
        <begin position="180"/>
        <end position="200"/>
    </location>
</feature>
<feature type="binding site" evidence="2">
    <location>
        <begin position="342"/>
        <end position="349"/>
    </location>
    <ligand>
        <name>GTP</name>
        <dbReference type="ChEBI" id="CHEBI:37565"/>
    </ligand>
</feature>
<feature type="binding site" evidence="2">
    <location>
        <begin position="389"/>
        <end position="393"/>
    </location>
    <ligand>
        <name>GTP</name>
        <dbReference type="ChEBI" id="CHEBI:37565"/>
    </ligand>
</feature>
<feature type="binding site" evidence="2">
    <location>
        <begin position="443"/>
        <end position="446"/>
    </location>
    <ligand>
        <name>GTP</name>
        <dbReference type="ChEBI" id="CHEBI:37565"/>
    </ligand>
</feature>
<dbReference type="EMBL" id="CP000157">
    <property type="protein sequence ID" value="ABC62781.1"/>
    <property type="molecule type" value="Genomic_DNA"/>
</dbReference>
<dbReference type="RefSeq" id="WP_011413657.1">
    <property type="nucleotide sequence ID" value="NC_007722.1"/>
</dbReference>
<dbReference type="SMR" id="Q2NC10"/>
<dbReference type="STRING" id="314225.ELI_03445"/>
<dbReference type="KEGG" id="eli:ELI_03445"/>
<dbReference type="eggNOG" id="COG0532">
    <property type="taxonomic scope" value="Bacteria"/>
</dbReference>
<dbReference type="HOGENOM" id="CLU_006301_10_1_5"/>
<dbReference type="OrthoDB" id="9811804at2"/>
<dbReference type="Proteomes" id="UP000008808">
    <property type="component" value="Chromosome"/>
</dbReference>
<dbReference type="GO" id="GO:0005829">
    <property type="term" value="C:cytosol"/>
    <property type="evidence" value="ECO:0007669"/>
    <property type="project" value="TreeGrafter"/>
</dbReference>
<dbReference type="GO" id="GO:0005525">
    <property type="term" value="F:GTP binding"/>
    <property type="evidence" value="ECO:0007669"/>
    <property type="project" value="UniProtKB-KW"/>
</dbReference>
<dbReference type="GO" id="GO:0003924">
    <property type="term" value="F:GTPase activity"/>
    <property type="evidence" value="ECO:0007669"/>
    <property type="project" value="UniProtKB-UniRule"/>
</dbReference>
<dbReference type="GO" id="GO:0003743">
    <property type="term" value="F:translation initiation factor activity"/>
    <property type="evidence" value="ECO:0007669"/>
    <property type="project" value="UniProtKB-UniRule"/>
</dbReference>
<dbReference type="CDD" id="cd01887">
    <property type="entry name" value="IF2_eIF5B"/>
    <property type="match status" value="1"/>
</dbReference>
<dbReference type="CDD" id="cd03702">
    <property type="entry name" value="IF2_mtIF2_II"/>
    <property type="match status" value="1"/>
</dbReference>
<dbReference type="CDD" id="cd03692">
    <property type="entry name" value="mtIF2_IVc"/>
    <property type="match status" value="1"/>
</dbReference>
<dbReference type="FunFam" id="2.40.30.10:FF:000007">
    <property type="entry name" value="Translation initiation factor IF-2"/>
    <property type="match status" value="1"/>
</dbReference>
<dbReference type="FunFam" id="2.40.30.10:FF:000008">
    <property type="entry name" value="Translation initiation factor IF-2"/>
    <property type="match status" value="1"/>
</dbReference>
<dbReference type="FunFam" id="3.40.50.10050:FF:000001">
    <property type="entry name" value="Translation initiation factor IF-2"/>
    <property type="match status" value="1"/>
</dbReference>
<dbReference type="FunFam" id="3.40.50.300:FF:000019">
    <property type="entry name" value="Translation initiation factor IF-2"/>
    <property type="match status" value="1"/>
</dbReference>
<dbReference type="Gene3D" id="3.40.50.300">
    <property type="entry name" value="P-loop containing nucleotide triphosphate hydrolases"/>
    <property type="match status" value="1"/>
</dbReference>
<dbReference type="Gene3D" id="2.40.30.10">
    <property type="entry name" value="Translation factors"/>
    <property type="match status" value="2"/>
</dbReference>
<dbReference type="Gene3D" id="3.40.50.10050">
    <property type="entry name" value="Translation initiation factor IF- 2, domain 3"/>
    <property type="match status" value="1"/>
</dbReference>
<dbReference type="HAMAP" id="MF_00100_B">
    <property type="entry name" value="IF_2_B"/>
    <property type="match status" value="1"/>
</dbReference>
<dbReference type="InterPro" id="IPR053905">
    <property type="entry name" value="EF-G-like_DII"/>
</dbReference>
<dbReference type="InterPro" id="IPR013575">
    <property type="entry name" value="IF2_assoc_dom_bac"/>
</dbReference>
<dbReference type="InterPro" id="IPR044145">
    <property type="entry name" value="IF2_II"/>
</dbReference>
<dbReference type="InterPro" id="IPR006847">
    <property type="entry name" value="IF2_N"/>
</dbReference>
<dbReference type="InterPro" id="IPR027417">
    <property type="entry name" value="P-loop_NTPase"/>
</dbReference>
<dbReference type="InterPro" id="IPR005225">
    <property type="entry name" value="Small_GTP-bd"/>
</dbReference>
<dbReference type="InterPro" id="IPR000795">
    <property type="entry name" value="T_Tr_GTP-bd_dom"/>
</dbReference>
<dbReference type="InterPro" id="IPR000178">
    <property type="entry name" value="TF_IF2_bacterial-like"/>
</dbReference>
<dbReference type="InterPro" id="IPR015760">
    <property type="entry name" value="TIF_IF2"/>
</dbReference>
<dbReference type="InterPro" id="IPR023115">
    <property type="entry name" value="TIF_IF2_dom3"/>
</dbReference>
<dbReference type="InterPro" id="IPR036925">
    <property type="entry name" value="TIF_IF2_dom3_sf"/>
</dbReference>
<dbReference type="InterPro" id="IPR009000">
    <property type="entry name" value="Transl_B-barrel_sf"/>
</dbReference>
<dbReference type="NCBIfam" id="TIGR00487">
    <property type="entry name" value="IF-2"/>
    <property type="match status" value="1"/>
</dbReference>
<dbReference type="NCBIfam" id="TIGR00231">
    <property type="entry name" value="small_GTP"/>
    <property type="match status" value="1"/>
</dbReference>
<dbReference type="PANTHER" id="PTHR43381:SF5">
    <property type="entry name" value="TR-TYPE G DOMAIN-CONTAINING PROTEIN"/>
    <property type="match status" value="1"/>
</dbReference>
<dbReference type="PANTHER" id="PTHR43381">
    <property type="entry name" value="TRANSLATION INITIATION FACTOR IF-2-RELATED"/>
    <property type="match status" value="1"/>
</dbReference>
<dbReference type="Pfam" id="PF22042">
    <property type="entry name" value="EF-G_D2"/>
    <property type="match status" value="1"/>
</dbReference>
<dbReference type="Pfam" id="PF00009">
    <property type="entry name" value="GTP_EFTU"/>
    <property type="match status" value="1"/>
</dbReference>
<dbReference type="Pfam" id="PF11987">
    <property type="entry name" value="IF-2"/>
    <property type="match status" value="1"/>
</dbReference>
<dbReference type="Pfam" id="PF08364">
    <property type="entry name" value="IF2_assoc"/>
    <property type="match status" value="1"/>
</dbReference>
<dbReference type="Pfam" id="PF04760">
    <property type="entry name" value="IF2_N"/>
    <property type="match status" value="1"/>
</dbReference>
<dbReference type="SUPFAM" id="SSF52156">
    <property type="entry name" value="Initiation factor IF2/eIF5b, domain 3"/>
    <property type="match status" value="1"/>
</dbReference>
<dbReference type="SUPFAM" id="SSF52540">
    <property type="entry name" value="P-loop containing nucleoside triphosphate hydrolases"/>
    <property type="match status" value="1"/>
</dbReference>
<dbReference type="SUPFAM" id="SSF50447">
    <property type="entry name" value="Translation proteins"/>
    <property type="match status" value="2"/>
</dbReference>
<dbReference type="PROSITE" id="PS51722">
    <property type="entry name" value="G_TR_2"/>
    <property type="match status" value="1"/>
</dbReference>
<comment type="function">
    <text evidence="2">One of the essential components for the initiation of protein synthesis. Protects formylmethionyl-tRNA from spontaneous hydrolysis and promotes its binding to the 30S ribosomal subunits. Also involved in the hydrolysis of GTP during the formation of the 70S ribosomal complex.</text>
</comment>
<comment type="subcellular location">
    <subcellularLocation>
        <location evidence="2">Cytoplasm</location>
    </subcellularLocation>
</comment>
<comment type="similarity">
    <text evidence="2">Belongs to the TRAFAC class translation factor GTPase superfamily. Classic translation factor GTPase family. IF-2 subfamily.</text>
</comment>
<proteinExistence type="inferred from homology"/>
<reference key="1">
    <citation type="journal article" date="2009" name="J. Bacteriol.">
        <title>Complete genome sequence of Erythrobacter litoralis HTCC2594.</title>
        <authorList>
            <person name="Oh H.M."/>
            <person name="Giovannoni S.J."/>
            <person name="Ferriera S."/>
            <person name="Johnson J."/>
            <person name="Cho J.C."/>
        </authorList>
    </citation>
    <scope>NUCLEOTIDE SEQUENCE [LARGE SCALE GENOMIC DNA]</scope>
    <source>
        <strain>HTCC2594</strain>
    </source>
</reference>
<name>IF2_ERYLH</name>
<gene>
    <name evidence="2" type="primary">infB</name>
    <name type="ordered locus">ELI_03445</name>
</gene>
<evidence type="ECO:0000250" key="1"/>
<evidence type="ECO:0000255" key="2">
    <source>
        <dbReference type="HAMAP-Rule" id="MF_00100"/>
    </source>
</evidence>
<evidence type="ECO:0000256" key="3">
    <source>
        <dbReference type="SAM" id="MobiDB-lite"/>
    </source>
</evidence>
<organism>
    <name type="scientific">Erythrobacter litoralis (strain HTCC2594)</name>
    <dbReference type="NCBI Taxonomy" id="314225"/>
    <lineage>
        <taxon>Bacteria</taxon>
        <taxon>Pseudomonadati</taxon>
        <taxon>Pseudomonadota</taxon>
        <taxon>Alphaproteobacteria</taxon>
        <taxon>Sphingomonadales</taxon>
        <taxon>Erythrobacteraceae</taxon>
        <taxon>Erythrobacter/Porphyrobacter group</taxon>
        <taxon>Erythrobacter</taxon>
    </lineage>
</organism>